<sequence length="737" mass="79401">MSQQLQEIEKVLSSHKLSGDDYAHIKQILGREPNLVEIGIFSAMWSEHCSYKSSKVHLSGFPTKAPWVIQGPGENAGVIDIGGGYAAVFKMESHNHPSFIEPYQGAATGVGGIMRDVFTMGARPIANLNALRFGDVLKDNKTSAHQRYLVRGVVAGIGGYGNCMGVPTIGGETSFDECYNGNILVNAFTLGLAKSDEIFYGRADGIGNPVIYVGAKTGRDGLGGAVMSSDSFTEESKSLRPTVQVGDPFTEKLLLEACLELFKTDHVVGIQDMGAAGLTSSSFEMAGRSGSGMIMHLDRVPAREEGMTPYDFMLSESQERMLLCAKKGSEAEIIKIFEKWDLDAAVIGEVTATGNMELFWHGDKVAEVPVNPVSEEAPVLNRPMSRPAYLDKIASVTIDDFARVPNQEAFERLTKSMEVVDKSWIYTQYDSMVQTNTIKKGGMLDASVVRVKENGKALAMSADCNVRYCYIDPKGGAAAAVIESGRNVAMSGARPLAITDCLNFGNPENPEVMWQFGQSCLGIKEACSALTTPVIGGNVSLYNETNGVSVFPTPSIATVGVNDDQNKVLMSSFQGEGNTLYLVGESNSEFGGSLYMKEICGVVAGVLPEIDYEKELTLWDLVIEANKKGILECAKDASSGGVAIALAKMAAVSGLGCSARMLVNDERDIFAESMSRAIIEVKQENSASFESMAGVLQCQKLGTVGGDIVKINNVSMSMKELQDNYFNTFKRVIERDI</sequence>
<proteinExistence type="inferred from homology"/>
<name>PURL_SULDN</name>
<feature type="chain" id="PRO_0000236674" description="Phosphoribosylformylglycinamidine synthase subunit PurL">
    <location>
        <begin position="1"/>
        <end position="737"/>
    </location>
</feature>
<feature type="active site" evidence="1">
    <location>
        <position position="48"/>
    </location>
</feature>
<feature type="active site" description="Proton acceptor" evidence="1">
    <location>
        <position position="94"/>
    </location>
</feature>
<feature type="binding site" evidence="1">
    <location>
        <position position="51"/>
    </location>
    <ligand>
        <name>ATP</name>
        <dbReference type="ChEBI" id="CHEBI:30616"/>
    </ligand>
</feature>
<feature type="binding site" evidence="1">
    <location>
        <position position="90"/>
    </location>
    <ligand>
        <name>ATP</name>
        <dbReference type="ChEBI" id="CHEBI:30616"/>
    </ligand>
</feature>
<feature type="binding site" evidence="1">
    <location>
        <position position="92"/>
    </location>
    <ligand>
        <name>Mg(2+)</name>
        <dbReference type="ChEBI" id="CHEBI:18420"/>
        <label>1</label>
    </ligand>
</feature>
<feature type="binding site" evidence="1">
    <location>
        <begin position="93"/>
        <end position="96"/>
    </location>
    <ligand>
        <name>substrate</name>
    </ligand>
</feature>
<feature type="binding site" evidence="1">
    <location>
        <position position="115"/>
    </location>
    <ligand>
        <name>substrate</name>
    </ligand>
</feature>
<feature type="binding site" evidence="1">
    <location>
        <position position="116"/>
    </location>
    <ligand>
        <name>Mg(2+)</name>
        <dbReference type="ChEBI" id="CHEBI:18420"/>
        <label>2</label>
    </ligand>
</feature>
<feature type="binding site" evidence="1">
    <location>
        <position position="244"/>
    </location>
    <ligand>
        <name>substrate</name>
    </ligand>
</feature>
<feature type="binding site" evidence="1">
    <location>
        <position position="272"/>
    </location>
    <ligand>
        <name>Mg(2+)</name>
        <dbReference type="ChEBI" id="CHEBI:18420"/>
        <label>2</label>
    </ligand>
</feature>
<feature type="binding site" evidence="1">
    <location>
        <begin position="316"/>
        <end position="318"/>
    </location>
    <ligand>
        <name>substrate</name>
    </ligand>
</feature>
<feature type="binding site" evidence="1">
    <location>
        <position position="500"/>
    </location>
    <ligand>
        <name>ATP</name>
        <dbReference type="ChEBI" id="CHEBI:30616"/>
    </ligand>
</feature>
<feature type="binding site" evidence="1">
    <location>
        <position position="537"/>
    </location>
    <ligand>
        <name>ATP</name>
        <dbReference type="ChEBI" id="CHEBI:30616"/>
    </ligand>
</feature>
<feature type="binding site" evidence="1">
    <location>
        <position position="538"/>
    </location>
    <ligand>
        <name>Mg(2+)</name>
        <dbReference type="ChEBI" id="CHEBI:18420"/>
        <label>1</label>
    </ligand>
</feature>
<feature type="binding site" evidence="1">
    <location>
        <position position="540"/>
    </location>
    <ligand>
        <name>substrate</name>
    </ligand>
</feature>
<evidence type="ECO:0000255" key="1">
    <source>
        <dbReference type="HAMAP-Rule" id="MF_00420"/>
    </source>
</evidence>
<accession>Q30T55</accession>
<reference key="1">
    <citation type="journal article" date="2008" name="Appl. Environ. Microbiol.">
        <title>Genome of the epsilonproteobacterial chemolithoautotroph Sulfurimonas denitrificans.</title>
        <authorList>
            <person name="Sievert S.M."/>
            <person name="Scott K.M."/>
            <person name="Klotz M.G."/>
            <person name="Chain P.S.G."/>
            <person name="Hauser L.J."/>
            <person name="Hemp J."/>
            <person name="Huegler M."/>
            <person name="Land M."/>
            <person name="Lapidus A."/>
            <person name="Larimer F.W."/>
            <person name="Lucas S."/>
            <person name="Malfatti S.A."/>
            <person name="Meyer F."/>
            <person name="Paulsen I.T."/>
            <person name="Ren Q."/>
            <person name="Simon J."/>
            <person name="Bailey K."/>
            <person name="Diaz E."/>
            <person name="Fitzpatrick K.A."/>
            <person name="Glover B."/>
            <person name="Gwatney N."/>
            <person name="Korajkic A."/>
            <person name="Long A."/>
            <person name="Mobberley J.M."/>
            <person name="Pantry S.N."/>
            <person name="Pazder G."/>
            <person name="Peterson S."/>
            <person name="Quintanilla J.D."/>
            <person name="Sprinkle R."/>
            <person name="Stephens J."/>
            <person name="Thomas P."/>
            <person name="Vaughn R."/>
            <person name="Weber M.J."/>
            <person name="Wooten L.L."/>
        </authorList>
    </citation>
    <scope>NUCLEOTIDE SEQUENCE [LARGE SCALE GENOMIC DNA]</scope>
    <source>
        <strain>ATCC 33889 / DSM 1251</strain>
    </source>
</reference>
<comment type="function">
    <text evidence="1">Part of the phosphoribosylformylglycinamidine synthase complex involved in the purines biosynthetic pathway. Catalyzes the ATP-dependent conversion of formylglycinamide ribonucleotide (FGAR) and glutamine to yield formylglycinamidine ribonucleotide (FGAM) and glutamate. The FGAM synthase complex is composed of three subunits. PurQ produces an ammonia molecule by converting glutamine to glutamate. PurL transfers the ammonia molecule to FGAR to form FGAM in an ATP-dependent manner. PurS interacts with PurQ and PurL and is thought to assist in the transfer of the ammonia molecule from PurQ to PurL.</text>
</comment>
<comment type="catalytic activity">
    <reaction evidence="1">
        <text>N(2)-formyl-N(1)-(5-phospho-beta-D-ribosyl)glycinamide + L-glutamine + ATP + H2O = 2-formamido-N(1)-(5-O-phospho-beta-D-ribosyl)acetamidine + L-glutamate + ADP + phosphate + H(+)</text>
        <dbReference type="Rhea" id="RHEA:17129"/>
        <dbReference type="ChEBI" id="CHEBI:15377"/>
        <dbReference type="ChEBI" id="CHEBI:15378"/>
        <dbReference type="ChEBI" id="CHEBI:29985"/>
        <dbReference type="ChEBI" id="CHEBI:30616"/>
        <dbReference type="ChEBI" id="CHEBI:43474"/>
        <dbReference type="ChEBI" id="CHEBI:58359"/>
        <dbReference type="ChEBI" id="CHEBI:147286"/>
        <dbReference type="ChEBI" id="CHEBI:147287"/>
        <dbReference type="ChEBI" id="CHEBI:456216"/>
        <dbReference type="EC" id="6.3.5.3"/>
    </reaction>
</comment>
<comment type="pathway">
    <text evidence="1">Purine metabolism; IMP biosynthesis via de novo pathway; 5-amino-1-(5-phospho-D-ribosyl)imidazole from N(2)-formyl-N(1)-(5-phospho-D-ribosyl)glycinamide: step 1/2.</text>
</comment>
<comment type="subunit">
    <text evidence="1">Monomer. Part of the FGAM synthase complex composed of 1 PurL, 1 PurQ and 2 PurS subunits.</text>
</comment>
<comment type="subcellular location">
    <subcellularLocation>
        <location evidence="1">Cytoplasm</location>
    </subcellularLocation>
</comment>
<comment type="similarity">
    <text evidence="1">Belongs to the FGAMS family.</text>
</comment>
<organism>
    <name type="scientific">Sulfurimonas denitrificans (strain ATCC 33889 / DSM 1251)</name>
    <name type="common">Thiomicrospira denitrificans (strain ATCC 33889 / DSM 1251)</name>
    <dbReference type="NCBI Taxonomy" id="326298"/>
    <lineage>
        <taxon>Bacteria</taxon>
        <taxon>Pseudomonadati</taxon>
        <taxon>Campylobacterota</taxon>
        <taxon>Epsilonproteobacteria</taxon>
        <taxon>Campylobacterales</taxon>
        <taxon>Sulfurimonadaceae</taxon>
        <taxon>Sulfurimonas</taxon>
    </lineage>
</organism>
<gene>
    <name evidence="1" type="primary">purL</name>
    <name type="ordered locus">Suden_0547</name>
</gene>
<keyword id="KW-0067">ATP-binding</keyword>
<keyword id="KW-0963">Cytoplasm</keyword>
<keyword id="KW-0436">Ligase</keyword>
<keyword id="KW-0460">Magnesium</keyword>
<keyword id="KW-0479">Metal-binding</keyword>
<keyword id="KW-0547">Nucleotide-binding</keyword>
<keyword id="KW-0658">Purine biosynthesis</keyword>
<keyword id="KW-1185">Reference proteome</keyword>
<dbReference type="EC" id="6.3.5.3" evidence="1"/>
<dbReference type="EMBL" id="CP000153">
    <property type="protein sequence ID" value="ABB43826.1"/>
    <property type="molecule type" value="Genomic_DNA"/>
</dbReference>
<dbReference type="RefSeq" id="WP_011372180.1">
    <property type="nucleotide sequence ID" value="NC_007575.1"/>
</dbReference>
<dbReference type="SMR" id="Q30T55"/>
<dbReference type="STRING" id="326298.Suden_0547"/>
<dbReference type="KEGG" id="tdn:Suden_0547"/>
<dbReference type="eggNOG" id="COG0046">
    <property type="taxonomic scope" value="Bacteria"/>
</dbReference>
<dbReference type="HOGENOM" id="CLU_003100_0_1_7"/>
<dbReference type="OrthoDB" id="9804441at2"/>
<dbReference type="UniPathway" id="UPA00074">
    <property type="reaction ID" value="UER00128"/>
</dbReference>
<dbReference type="Proteomes" id="UP000002714">
    <property type="component" value="Chromosome"/>
</dbReference>
<dbReference type="GO" id="GO:0005737">
    <property type="term" value="C:cytoplasm"/>
    <property type="evidence" value="ECO:0007669"/>
    <property type="project" value="UniProtKB-SubCell"/>
</dbReference>
<dbReference type="GO" id="GO:0005524">
    <property type="term" value="F:ATP binding"/>
    <property type="evidence" value="ECO:0007669"/>
    <property type="project" value="UniProtKB-UniRule"/>
</dbReference>
<dbReference type="GO" id="GO:0000287">
    <property type="term" value="F:magnesium ion binding"/>
    <property type="evidence" value="ECO:0007669"/>
    <property type="project" value="UniProtKB-UniRule"/>
</dbReference>
<dbReference type="GO" id="GO:0004642">
    <property type="term" value="F:phosphoribosylformylglycinamidine synthase activity"/>
    <property type="evidence" value="ECO:0007669"/>
    <property type="project" value="UniProtKB-UniRule"/>
</dbReference>
<dbReference type="GO" id="GO:0006189">
    <property type="term" value="P:'de novo' IMP biosynthetic process"/>
    <property type="evidence" value="ECO:0007669"/>
    <property type="project" value="UniProtKB-UniRule"/>
</dbReference>
<dbReference type="CDD" id="cd02203">
    <property type="entry name" value="PurL_repeat1"/>
    <property type="match status" value="1"/>
</dbReference>
<dbReference type="CDD" id="cd02204">
    <property type="entry name" value="PurL_repeat2"/>
    <property type="match status" value="1"/>
</dbReference>
<dbReference type="FunFam" id="3.30.1330.10:FF:000004">
    <property type="entry name" value="Phosphoribosylformylglycinamidine synthase subunit PurL"/>
    <property type="match status" value="1"/>
</dbReference>
<dbReference type="Gene3D" id="3.90.650.10">
    <property type="entry name" value="PurM-like C-terminal domain"/>
    <property type="match status" value="2"/>
</dbReference>
<dbReference type="Gene3D" id="3.30.1330.10">
    <property type="entry name" value="PurM-like, N-terminal domain"/>
    <property type="match status" value="2"/>
</dbReference>
<dbReference type="HAMAP" id="MF_00420">
    <property type="entry name" value="PurL_2"/>
    <property type="match status" value="1"/>
</dbReference>
<dbReference type="InterPro" id="IPR010074">
    <property type="entry name" value="PRibForGlyAmidine_synth_PurL"/>
</dbReference>
<dbReference type="InterPro" id="IPR041609">
    <property type="entry name" value="PurL_linker"/>
</dbReference>
<dbReference type="InterPro" id="IPR010918">
    <property type="entry name" value="PurM-like_C_dom"/>
</dbReference>
<dbReference type="InterPro" id="IPR036676">
    <property type="entry name" value="PurM-like_C_sf"/>
</dbReference>
<dbReference type="InterPro" id="IPR016188">
    <property type="entry name" value="PurM-like_N"/>
</dbReference>
<dbReference type="InterPro" id="IPR036921">
    <property type="entry name" value="PurM-like_N_sf"/>
</dbReference>
<dbReference type="NCBIfam" id="TIGR01736">
    <property type="entry name" value="FGAM_synth_II"/>
    <property type="match status" value="1"/>
</dbReference>
<dbReference type="NCBIfam" id="NF002290">
    <property type="entry name" value="PRK01213.1"/>
    <property type="match status" value="1"/>
</dbReference>
<dbReference type="PANTHER" id="PTHR43555">
    <property type="entry name" value="PHOSPHORIBOSYLFORMYLGLYCINAMIDINE SYNTHASE SUBUNIT PURL"/>
    <property type="match status" value="1"/>
</dbReference>
<dbReference type="PANTHER" id="PTHR43555:SF1">
    <property type="entry name" value="PHOSPHORIBOSYLFORMYLGLYCINAMIDINE SYNTHASE SUBUNIT PURL"/>
    <property type="match status" value="1"/>
</dbReference>
<dbReference type="Pfam" id="PF00586">
    <property type="entry name" value="AIRS"/>
    <property type="match status" value="2"/>
</dbReference>
<dbReference type="Pfam" id="PF02769">
    <property type="entry name" value="AIRS_C"/>
    <property type="match status" value="2"/>
</dbReference>
<dbReference type="Pfam" id="PF18072">
    <property type="entry name" value="FGAR-AT_linker"/>
    <property type="match status" value="1"/>
</dbReference>
<dbReference type="PIRSF" id="PIRSF001587">
    <property type="entry name" value="FGAM_synthase_II"/>
    <property type="match status" value="1"/>
</dbReference>
<dbReference type="SUPFAM" id="SSF56042">
    <property type="entry name" value="PurM C-terminal domain-like"/>
    <property type="match status" value="2"/>
</dbReference>
<dbReference type="SUPFAM" id="SSF55326">
    <property type="entry name" value="PurM N-terminal domain-like"/>
    <property type="match status" value="2"/>
</dbReference>
<protein>
    <recommendedName>
        <fullName evidence="1">Phosphoribosylformylglycinamidine synthase subunit PurL</fullName>
        <shortName evidence="1">FGAM synthase</shortName>
        <ecNumber evidence="1">6.3.5.3</ecNumber>
    </recommendedName>
    <alternativeName>
        <fullName evidence="1">Formylglycinamide ribonucleotide amidotransferase subunit II</fullName>
        <shortName evidence="1">FGAR amidotransferase II</shortName>
        <shortName evidence="1">FGAR-AT II</shortName>
    </alternativeName>
    <alternativeName>
        <fullName evidence="1">Glutamine amidotransferase PurL</fullName>
    </alternativeName>
    <alternativeName>
        <fullName evidence="1">Phosphoribosylformylglycinamidine synthase subunit II</fullName>
    </alternativeName>
</protein>